<protein>
    <recommendedName>
        <fullName evidence="1">Eukaryotic translation initiation factor 6</fullName>
        <shortName evidence="1">eIF-6</shortName>
    </recommendedName>
</protein>
<proteinExistence type="evidence at protein level"/>
<keyword id="KW-0002">3D-structure</keyword>
<keyword id="KW-0963">Cytoplasm</keyword>
<keyword id="KW-0396">Initiation factor</keyword>
<keyword id="KW-0539">Nucleus</keyword>
<keyword id="KW-0648">Protein biosynthesis</keyword>
<keyword id="KW-1185">Reference proteome</keyword>
<keyword id="KW-0690">Ribosome biogenesis</keyword>
<sequence length="245" mass="26920">MARRCQFENSNDIGVFCKLTSAYCLVSVGASENFYSVFESELVPHIPVIHTSIGGTRIVGRVTCGNKNGLLVPNTCNDNELRNIRNSLPDNVRVRRIEEKLSALGNCVVANDYVALIHPDLDRESEEIIADTLGVEVFRTTIANNVLVGTYCVINNRGGLVHPLASVEELDELANLLQIPLCAGTINRGSDVIGAGLVVNDWAAFCGLDTTSTEISVVENIFKLNEMKDENMDNEMRKDFVMNLE</sequence>
<comment type="function">
    <text evidence="1">Binds to the 60S ribosomal subunit and prevents its association with the 40S ribosomal subunit to form the 80S initiation complex in the cytoplasm. May also be involved in ribosome biogenesis.</text>
</comment>
<comment type="subunit">
    <text evidence="1">Monomer. Associates with the 60S ribosomal subunit.</text>
</comment>
<comment type="subcellular location">
    <subcellularLocation>
        <location evidence="1">Cytoplasm</location>
    </subcellularLocation>
    <subcellularLocation>
        <location evidence="1">Nucleus</location>
        <location evidence="1">Nucleolus</location>
    </subcellularLocation>
    <text evidence="1">Shuttles between cytoplasm and nucleus/nucleolus.</text>
</comment>
<comment type="similarity">
    <text evidence="1">Belongs to the eIF-6 family.</text>
</comment>
<evidence type="ECO:0000255" key="1">
    <source>
        <dbReference type="HAMAP-Rule" id="MF_03132"/>
    </source>
</evidence>
<feature type="chain" id="PRO_0000413528" description="Eukaryotic translation initiation factor 6">
    <location>
        <begin position="1"/>
        <end position="245"/>
    </location>
</feature>
<reference key="1">
    <citation type="journal article" date="2006" name="PLoS Biol.">
        <title>Macronuclear genome sequence of the ciliate Tetrahymena thermophila, a model eukaryote.</title>
        <authorList>
            <person name="Eisen J.A."/>
            <person name="Coyne R.S."/>
            <person name="Wu M."/>
            <person name="Wu D."/>
            <person name="Thiagarajan M."/>
            <person name="Wortman J.R."/>
            <person name="Badger J.H."/>
            <person name="Ren Q."/>
            <person name="Amedeo P."/>
            <person name="Jones K.M."/>
            <person name="Tallon L.J."/>
            <person name="Delcher A.L."/>
            <person name="Salzberg S.L."/>
            <person name="Silva J.C."/>
            <person name="Haas B.J."/>
            <person name="Majoros W.H."/>
            <person name="Farzad M."/>
            <person name="Carlton J.M."/>
            <person name="Smith R.K. Jr."/>
            <person name="Garg J."/>
            <person name="Pearlman R.E."/>
            <person name="Karrer K.M."/>
            <person name="Sun L."/>
            <person name="Manning G."/>
            <person name="Elde N.C."/>
            <person name="Turkewitz A.P."/>
            <person name="Asai D.J."/>
            <person name="Wilkes D.E."/>
            <person name="Wang Y."/>
            <person name="Cai H."/>
            <person name="Collins K."/>
            <person name="Stewart B.A."/>
            <person name="Lee S.R."/>
            <person name="Wilamowska K."/>
            <person name="Weinberg Z."/>
            <person name="Ruzzo W.L."/>
            <person name="Wloga D."/>
            <person name="Gaertig J."/>
            <person name="Frankel J."/>
            <person name="Tsao C.-C."/>
            <person name="Gorovsky M.A."/>
            <person name="Keeling P.J."/>
            <person name="Waller R.F."/>
            <person name="Patron N.J."/>
            <person name="Cherry J.M."/>
            <person name="Stover N.A."/>
            <person name="Krieger C.J."/>
            <person name="del Toro C."/>
            <person name="Ryder H.F."/>
            <person name="Williamson S.C."/>
            <person name="Barbeau R.A."/>
            <person name="Hamilton E.P."/>
            <person name="Orias E."/>
        </authorList>
    </citation>
    <scope>NUCLEOTIDE SEQUENCE [LARGE SCALE GENOMIC DNA]</scope>
    <source>
        <strain>SB210</strain>
    </source>
</reference>
<accession>Q245F2</accession>
<name>IF6_TETTS</name>
<organism>
    <name type="scientific">Tetrahymena thermophila (strain SB210)</name>
    <dbReference type="NCBI Taxonomy" id="312017"/>
    <lineage>
        <taxon>Eukaryota</taxon>
        <taxon>Sar</taxon>
        <taxon>Alveolata</taxon>
        <taxon>Ciliophora</taxon>
        <taxon>Intramacronucleata</taxon>
        <taxon>Oligohymenophorea</taxon>
        <taxon>Hymenostomatida</taxon>
        <taxon>Tetrahymenina</taxon>
        <taxon>Tetrahymenidae</taxon>
        <taxon>Tetrahymena</taxon>
    </lineage>
</organism>
<gene>
    <name evidence="1" type="primary">EIF6</name>
    <name type="ORF">TTHERM_00732590</name>
</gene>
<dbReference type="EMBL" id="GG662485">
    <property type="protein sequence ID" value="EAS03412.1"/>
    <property type="molecule type" value="Genomic_DNA"/>
</dbReference>
<dbReference type="RefSeq" id="XP_001023657.1">
    <property type="nucleotide sequence ID" value="XM_001023657.1"/>
</dbReference>
<dbReference type="PDB" id="4V8P">
    <property type="method" value="X-ray"/>
    <property type="resolution" value="3.52 A"/>
    <property type="chains" value="AJ/DJ/FJ/HJ=1-245"/>
</dbReference>
<dbReference type="PDBsum" id="4V8P"/>
<dbReference type="SMR" id="Q245F2"/>
<dbReference type="FunCoup" id="Q245F2">
    <property type="interactions" value="514"/>
</dbReference>
<dbReference type="IntAct" id="Q245F2">
    <property type="interactions" value="41"/>
</dbReference>
<dbReference type="STRING" id="312017.Q245F2"/>
<dbReference type="EnsemblProtists" id="EAS03412">
    <property type="protein sequence ID" value="EAS03412"/>
    <property type="gene ID" value="TTHERM_00732590"/>
</dbReference>
<dbReference type="GeneID" id="7847076"/>
<dbReference type="KEGG" id="tet:TTHERM_00732590"/>
<dbReference type="eggNOG" id="KOG3185">
    <property type="taxonomic scope" value="Eukaryota"/>
</dbReference>
<dbReference type="HOGENOM" id="CLU_071894_0_0_1"/>
<dbReference type="InParanoid" id="Q245F2"/>
<dbReference type="OMA" id="WCAFCGM"/>
<dbReference type="OrthoDB" id="291893at2759"/>
<dbReference type="Proteomes" id="UP000009168">
    <property type="component" value="Unassembled WGS sequence"/>
</dbReference>
<dbReference type="GO" id="GO:0005737">
    <property type="term" value="C:cytoplasm"/>
    <property type="evidence" value="ECO:0007669"/>
    <property type="project" value="UniProtKB-SubCell"/>
</dbReference>
<dbReference type="GO" id="GO:0005730">
    <property type="term" value="C:nucleolus"/>
    <property type="evidence" value="ECO:0007669"/>
    <property type="project" value="UniProtKB-SubCell"/>
</dbReference>
<dbReference type="GO" id="GO:0043023">
    <property type="term" value="F:ribosomal large subunit binding"/>
    <property type="evidence" value="ECO:0007669"/>
    <property type="project" value="UniProtKB-UniRule"/>
</dbReference>
<dbReference type="GO" id="GO:0003743">
    <property type="term" value="F:translation initiation factor activity"/>
    <property type="evidence" value="ECO:0007669"/>
    <property type="project" value="UniProtKB-UniRule"/>
</dbReference>
<dbReference type="GO" id="GO:0042256">
    <property type="term" value="P:cytosolic ribosome assembly"/>
    <property type="evidence" value="ECO:0007669"/>
    <property type="project" value="UniProtKB-UniRule"/>
</dbReference>
<dbReference type="GO" id="GO:0042273">
    <property type="term" value="P:ribosomal large subunit biogenesis"/>
    <property type="evidence" value="ECO:0007669"/>
    <property type="project" value="UniProtKB-UniRule"/>
</dbReference>
<dbReference type="CDD" id="cd00527">
    <property type="entry name" value="IF6"/>
    <property type="match status" value="1"/>
</dbReference>
<dbReference type="FunFam" id="3.75.10.10:FF:000001">
    <property type="entry name" value="Eukaryotic translation initiation factor 6"/>
    <property type="match status" value="1"/>
</dbReference>
<dbReference type="Gene3D" id="3.75.10.10">
    <property type="entry name" value="L-arginine/glycine Amidinotransferase, Chain A"/>
    <property type="match status" value="1"/>
</dbReference>
<dbReference type="HAMAP" id="MF_00032">
    <property type="entry name" value="eIF_6"/>
    <property type="match status" value="1"/>
</dbReference>
<dbReference type="InterPro" id="IPR002769">
    <property type="entry name" value="eIF6"/>
</dbReference>
<dbReference type="NCBIfam" id="TIGR00323">
    <property type="entry name" value="eIF-6"/>
    <property type="match status" value="1"/>
</dbReference>
<dbReference type="PANTHER" id="PTHR10784">
    <property type="entry name" value="TRANSLATION INITIATION FACTOR 6"/>
    <property type="match status" value="1"/>
</dbReference>
<dbReference type="Pfam" id="PF01912">
    <property type="entry name" value="eIF-6"/>
    <property type="match status" value="1"/>
</dbReference>
<dbReference type="PIRSF" id="PIRSF006413">
    <property type="entry name" value="IF-6"/>
    <property type="match status" value="1"/>
</dbReference>
<dbReference type="SMART" id="SM00654">
    <property type="entry name" value="eIF6"/>
    <property type="match status" value="1"/>
</dbReference>
<dbReference type="SUPFAM" id="SSF55909">
    <property type="entry name" value="Pentein"/>
    <property type="match status" value="1"/>
</dbReference>